<feature type="chain" id="PRO_0000391164" description="NADH-quinone oxidoreductase subunit N 1">
    <location>
        <begin position="1"/>
        <end position="491"/>
    </location>
</feature>
<feature type="transmembrane region" description="Helical" evidence="1">
    <location>
        <begin position="15"/>
        <end position="35"/>
    </location>
</feature>
<feature type="transmembrane region" description="Helical" evidence="1">
    <location>
        <begin position="41"/>
        <end position="61"/>
    </location>
</feature>
<feature type="transmembrane region" description="Helical" evidence="1">
    <location>
        <begin position="77"/>
        <end position="97"/>
    </location>
</feature>
<feature type="transmembrane region" description="Helical" evidence="1">
    <location>
        <begin position="105"/>
        <end position="125"/>
    </location>
</feature>
<feature type="transmembrane region" description="Helical" evidence="1">
    <location>
        <begin position="130"/>
        <end position="150"/>
    </location>
</feature>
<feature type="transmembrane region" description="Helical" evidence="1">
    <location>
        <begin position="165"/>
        <end position="185"/>
    </location>
</feature>
<feature type="transmembrane region" description="Helical" evidence="1">
    <location>
        <begin position="211"/>
        <end position="231"/>
    </location>
</feature>
<feature type="transmembrane region" description="Helical" evidence="1">
    <location>
        <begin position="247"/>
        <end position="269"/>
    </location>
</feature>
<feature type="transmembrane region" description="Helical" evidence="1">
    <location>
        <begin position="279"/>
        <end position="299"/>
    </location>
</feature>
<feature type="transmembrane region" description="Helical" evidence="1">
    <location>
        <begin position="307"/>
        <end position="327"/>
    </location>
</feature>
<feature type="transmembrane region" description="Helical" evidence="1">
    <location>
        <begin position="333"/>
        <end position="353"/>
    </location>
</feature>
<feature type="transmembrane region" description="Helical" evidence="1">
    <location>
        <begin position="378"/>
        <end position="398"/>
    </location>
</feature>
<feature type="transmembrane region" description="Helical" evidence="1">
    <location>
        <begin position="416"/>
        <end position="436"/>
    </location>
</feature>
<feature type="transmembrane region" description="Helical" evidence="1">
    <location>
        <begin position="459"/>
        <end position="479"/>
    </location>
</feature>
<accession>A9B6Y0</accession>
<comment type="function">
    <text evidence="1">NDH-1 shuttles electrons from NADH, via FMN and iron-sulfur (Fe-S) centers, to quinones in the respiratory chain. The immediate electron acceptor for the enzyme in this species is believed to be ubiquinone. Couples the redox reaction to proton translocation (for every two electrons transferred, four hydrogen ions are translocated across the cytoplasmic membrane), and thus conserves the redox energy in a proton gradient.</text>
</comment>
<comment type="catalytic activity">
    <reaction evidence="1">
        <text>a quinone + NADH + 5 H(+)(in) = a quinol + NAD(+) + 4 H(+)(out)</text>
        <dbReference type="Rhea" id="RHEA:57888"/>
        <dbReference type="ChEBI" id="CHEBI:15378"/>
        <dbReference type="ChEBI" id="CHEBI:24646"/>
        <dbReference type="ChEBI" id="CHEBI:57540"/>
        <dbReference type="ChEBI" id="CHEBI:57945"/>
        <dbReference type="ChEBI" id="CHEBI:132124"/>
    </reaction>
</comment>
<comment type="subunit">
    <text evidence="1">NDH-1 is composed of 14 different subunits. Subunits NuoA, H, J, K, L, M, N constitute the membrane sector of the complex.</text>
</comment>
<comment type="subcellular location">
    <subcellularLocation>
        <location evidence="1">Cell membrane</location>
        <topology evidence="1">Multi-pass membrane protein</topology>
    </subcellularLocation>
</comment>
<comment type="similarity">
    <text evidence="1">Belongs to the complex I subunit 2 family.</text>
</comment>
<name>NUON1_HERA2</name>
<keyword id="KW-1003">Cell membrane</keyword>
<keyword id="KW-0472">Membrane</keyword>
<keyword id="KW-0520">NAD</keyword>
<keyword id="KW-0874">Quinone</keyword>
<keyword id="KW-1278">Translocase</keyword>
<keyword id="KW-0812">Transmembrane</keyword>
<keyword id="KW-1133">Transmembrane helix</keyword>
<keyword id="KW-0813">Transport</keyword>
<keyword id="KW-0830">Ubiquinone</keyword>
<reference key="1">
    <citation type="journal article" date="2011" name="Stand. Genomic Sci.">
        <title>Complete genome sequence of the filamentous gliding predatory bacterium Herpetosiphon aurantiacus type strain (114-95(T)).</title>
        <authorList>
            <person name="Kiss H."/>
            <person name="Nett M."/>
            <person name="Domin N."/>
            <person name="Martin K."/>
            <person name="Maresca J.A."/>
            <person name="Copeland A."/>
            <person name="Lapidus A."/>
            <person name="Lucas S."/>
            <person name="Berry K.W."/>
            <person name="Glavina Del Rio T."/>
            <person name="Dalin E."/>
            <person name="Tice H."/>
            <person name="Pitluck S."/>
            <person name="Richardson P."/>
            <person name="Bruce D."/>
            <person name="Goodwin L."/>
            <person name="Han C."/>
            <person name="Detter J.C."/>
            <person name="Schmutz J."/>
            <person name="Brettin T."/>
            <person name="Land M."/>
            <person name="Hauser L."/>
            <person name="Kyrpides N.C."/>
            <person name="Ivanova N."/>
            <person name="Goeker M."/>
            <person name="Woyke T."/>
            <person name="Klenk H.P."/>
            <person name="Bryant D.A."/>
        </authorList>
    </citation>
    <scope>NUCLEOTIDE SEQUENCE [LARGE SCALE GENOMIC DNA]</scope>
    <source>
        <strain>ATCC 23779 / DSM 785 / 114-95</strain>
    </source>
</reference>
<gene>
    <name evidence="1" type="primary">nuoN1</name>
    <name type="ordered locus">Haur_3211</name>
</gene>
<organism>
    <name type="scientific">Herpetosiphon aurantiacus (strain ATCC 23779 / DSM 785 / 114-95)</name>
    <dbReference type="NCBI Taxonomy" id="316274"/>
    <lineage>
        <taxon>Bacteria</taxon>
        <taxon>Bacillati</taxon>
        <taxon>Chloroflexota</taxon>
        <taxon>Chloroflexia</taxon>
        <taxon>Herpetosiphonales</taxon>
        <taxon>Herpetosiphonaceae</taxon>
        <taxon>Herpetosiphon</taxon>
    </lineage>
</organism>
<evidence type="ECO:0000255" key="1">
    <source>
        <dbReference type="HAMAP-Rule" id="MF_00445"/>
    </source>
</evidence>
<protein>
    <recommendedName>
        <fullName evidence="1">NADH-quinone oxidoreductase subunit N 1</fullName>
        <ecNumber evidence="1">7.1.1.-</ecNumber>
    </recommendedName>
    <alternativeName>
        <fullName evidence="1">NADH dehydrogenase I subunit N 1</fullName>
    </alternativeName>
    <alternativeName>
        <fullName evidence="1">NDH-1 subunit N 1</fullName>
    </alternativeName>
</protein>
<sequence>MNDLTFITPEINWTVLGMPAFLMIWAMLVLIVDMFTSDRRVLLTLSLIGLGVTAALGALDYGSTISGFSDMLVFDKFGVLVNWILLAGTALTLLIAFDYMPRQNLSQGEFYPLVLFATSGMLFLVQSTDLVTIFIGVETLSIALYVLTGFAVPQFKSGEAAIKYLLLGGFAAGFLVYGIALIYGMTGKTNLAQIANELSTWQSTGKALDDPILLAGVGFVLIALGFKVSMFPFHAWTPDVYEGAPTPVTAYMSVATKGAAFAAMLRFLNVAFPALKPEWQLLFGLFAAATMAYGNIVAVAQTNLKRMLAYSSIAHAGYMLLGVLAASEKGISAFTVYLLAYTLTNLGAFAVLIALENRGMPVFELSDLRGLGKRSPLLALAMTVFMFSLAGVPPTAGFASKFGIFRAAWDANLDYLAIIGVVTSVISAFFYLRVIVTMWMRDTEATEPQPTYATASLSLGVIVAVIGIIAVGILPNIFTDLAKALVLTVAP</sequence>
<dbReference type="EC" id="7.1.1.-" evidence="1"/>
<dbReference type="EMBL" id="CP000875">
    <property type="protein sequence ID" value="ABX05848.1"/>
    <property type="molecule type" value="Genomic_DNA"/>
</dbReference>
<dbReference type="SMR" id="A9B6Y0"/>
<dbReference type="STRING" id="316274.Haur_3211"/>
<dbReference type="KEGG" id="hau:Haur_3211"/>
<dbReference type="eggNOG" id="COG1007">
    <property type="taxonomic scope" value="Bacteria"/>
</dbReference>
<dbReference type="HOGENOM" id="CLU_007100_1_5_0"/>
<dbReference type="InParanoid" id="A9B6Y0"/>
<dbReference type="Proteomes" id="UP000000787">
    <property type="component" value="Chromosome"/>
</dbReference>
<dbReference type="GO" id="GO:0005886">
    <property type="term" value="C:plasma membrane"/>
    <property type="evidence" value="ECO:0007669"/>
    <property type="project" value="UniProtKB-SubCell"/>
</dbReference>
<dbReference type="GO" id="GO:0008137">
    <property type="term" value="F:NADH dehydrogenase (ubiquinone) activity"/>
    <property type="evidence" value="ECO:0007669"/>
    <property type="project" value="InterPro"/>
</dbReference>
<dbReference type="GO" id="GO:0050136">
    <property type="term" value="F:NADH:ubiquinone reductase (non-electrogenic) activity"/>
    <property type="evidence" value="ECO:0007669"/>
    <property type="project" value="UniProtKB-UniRule"/>
</dbReference>
<dbReference type="GO" id="GO:0048038">
    <property type="term" value="F:quinone binding"/>
    <property type="evidence" value="ECO:0007669"/>
    <property type="project" value="UniProtKB-KW"/>
</dbReference>
<dbReference type="GO" id="GO:0042773">
    <property type="term" value="P:ATP synthesis coupled electron transport"/>
    <property type="evidence" value="ECO:0007669"/>
    <property type="project" value="InterPro"/>
</dbReference>
<dbReference type="HAMAP" id="MF_00445">
    <property type="entry name" value="NDH1_NuoN_1"/>
    <property type="match status" value="1"/>
</dbReference>
<dbReference type="InterPro" id="IPR010096">
    <property type="entry name" value="NADH-Q_OxRdtase_suN/2"/>
</dbReference>
<dbReference type="InterPro" id="IPR001750">
    <property type="entry name" value="ND/Mrp_TM"/>
</dbReference>
<dbReference type="NCBIfam" id="TIGR01770">
    <property type="entry name" value="NDH_I_N"/>
    <property type="match status" value="1"/>
</dbReference>
<dbReference type="PANTHER" id="PTHR22773">
    <property type="entry name" value="NADH DEHYDROGENASE"/>
    <property type="match status" value="1"/>
</dbReference>
<dbReference type="Pfam" id="PF00361">
    <property type="entry name" value="Proton_antipo_M"/>
    <property type="match status" value="1"/>
</dbReference>
<proteinExistence type="inferred from homology"/>